<protein>
    <recommendedName>
        <fullName evidence="1">Small ribosomal subunit protein bS21</fullName>
    </recommendedName>
    <alternativeName>
        <fullName evidence="2">30S ribosomal protein S21</fullName>
    </alternativeName>
</protein>
<keyword id="KW-0687">Ribonucleoprotein</keyword>
<keyword id="KW-0689">Ribosomal protein</keyword>
<accession>P66515</accession>
<accession>G0KDX5</accession>
<accession>Q8YD45</accession>
<sequence length="75" mass="8817">MQVLVRDNNVDQALRALKKKMQREGIFREMKMRGHYEKPSEKRAREKAEAVRRARKLARKRAQREGLIGGRTGAR</sequence>
<dbReference type="EMBL" id="AE014292">
    <property type="protein sequence ID" value="AAN34137.1"/>
    <property type="molecule type" value="Genomic_DNA"/>
</dbReference>
<dbReference type="EMBL" id="CP002998">
    <property type="protein sequence ID" value="AEM20413.1"/>
    <property type="molecule type" value="Genomic_DNA"/>
</dbReference>
<dbReference type="RefSeq" id="WP_002965682.1">
    <property type="nucleotide sequence ID" value="NZ_KN046805.1"/>
</dbReference>
<dbReference type="SMR" id="P66515"/>
<dbReference type="GeneID" id="97533017"/>
<dbReference type="KEGG" id="bms:BRA0966"/>
<dbReference type="KEGG" id="bsi:BS1330_II0958"/>
<dbReference type="HOGENOM" id="CLU_159258_0_1_5"/>
<dbReference type="Proteomes" id="UP000007104">
    <property type="component" value="Chromosome II"/>
</dbReference>
<dbReference type="GO" id="GO:1990904">
    <property type="term" value="C:ribonucleoprotein complex"/>
    <property type="evidence" value="ECO:0007669"/>
    <property type="project" value="UniProtKB-KW"/>
</dbReference>
<dbReference type="GO" id="GO:0005840">
    <property type="term" value="C:ribosome"/>
    <property type="evidence" value="ECO:0007669"/>
    <property type="project" value="UniProtKB-KW"/>
</dbReference>
<dbReference type="GO" id="GO:0003735">
    <property type="term" value="F:structural constituent of ribosome"/>
    <property type="evidence" value="ECO:0007669"/>
    <property type="project" value="InterPro"/>
</dbReference>
<dbReference type="GO" id="GO:0006412">
    <property type="term" value="P:translation"/>
    <property type="evidence" value="ECO:0007669"/>
    <property type="project" value="UniProtKB-UniRule"/>
</dbReference>
<dbReference type="Gene3D" id="1.20.5.1150">
    <property type="entry name" value="Ribosomal protein S8"/>
    <property type="match status" value="1"/>
</dbReference>
<dbReference type="HAMAP" id="MF_00358">
    <property type="entry name" value="Ribosomal_bS21"/>
    <property type="match status" value="1"/>
</dbReference>
<dbReference type="InterPro" id="IPR001911">
    <property type="entry name" value="Ribosomal_bS21"/>
</dbReference>
<dbReference type="InterPro" id="IPR018278">
    <property type="entry name" value="Ribosomal_bS21_CS"/>
</dbReference>
<dbReference type="InterPro" id="IPR038380">
    <property type="entry name" value="Ribosomal_bS21_sf"/>
</dbReference>
<dbReference type="NCBIfam" id="TIGR00030">
    <property type="entry name" value="S21p"/>
    <property type="match status" value="1"/>
</dbReference>
<dbReference type="PANTHER" id="PTHR21109">
    <property type="entry name" value="MITOCHONDRIAL 28S RIBOSOMAL PROTEIN S21"/>
    <property type="match status" value="1"/>
</dbReference>
<dbReference type="PANTHER" id="PTHR21109:SF0">
    <property type="entry name" value="SMALL RIBOSOMAL SUBUNIT PROTEIN BS21M"/>
    <property type="match status" value="1"/>
</dbReference>
<dbReference type="Pfam" id="PF01165">
    <property type="entry name" value="Ribosomal_S21"/>
    <property type="match status" value="1"/>
</dbReference>
<dbReference type="PRINTS" id="PR00976">
    <property type="entry name" value="RIBOSOMALS21"/>
</dbReference>
<dbReference type="PROSITE" id="PS01181">
    <property type="entry name" value="RIBOSOMAL_S21"/>
    <property type="match status" value="1"/>
</dbReference>
<evidence type="ECO:0000255" key="1">
    <source>
        <dbReference type="HAMAP-Rule" id="MF_00358"/>
    </source>
</evidence>
<evidence type="ECO:0000305" key="2"/>
<reference key="1">
    <citation type="journal article" date="2002" name="Proc. Natl. Acad. Sci. U.S.A.">
        <title>The Brucella suis genome reveals fundamental similarities between animal and plant pathogens and symbionts.</title>
        <authorList>
            <person name="Paulsen I.T."/>
            <person name="Seshadri R."/>
            <person name="Nelson K.E."/>
            <person name="Eisen J.A."/>
            <person name="Heidelberg J.F."/>
            <person name="Read T.D."/>
            <person name="Dodson R.J."/>
            <person name="Umayam L.A."/>
            <person name="Brinkac L.M."/>
            <person name="Beanan M.J."/>
            <person name="Daugherty S.C."/>
            <person name="DeBoy R.T."/>
            <person name="Durkin A.S."/>
            <person name="Kolonay J.F."/>
            <person name="Madupu R."/>
            <person name="Nelson W.C."/>
            <person name="Ayodeji B."/>
            <person name="Kraul M."/>
            <person name="Shetty J."/>
            <person name="Malek J.A."/>
            <person name="Van Aken S.E."/>
            <person name="Riedmuller S."/>
            <person name="Tettelin H."/>
            <person name="Gill S.R."/>
            <person name="White O."/>
            <person name="Salzberg S.L."/>
            <person name="Hoover D.L."/>
            <person name="Lindler L.E."/>
            <person name="Halling S.M."/>
            <person name="Boyle S.M."/>
            <person name="Fraser C.M."/>
        </authorList>
    </citation>
    <scope>NUCLEOTIDE SEQUENCE [LARGE SCALE GENOMIC DNA]</scope>
    <source>
        <strain>1330</strain>
    </source>
</reference>
<reference key="2">
    <citation type="journal article" date="2011" name="J. Bacteriol.">
        <title>Revised genome sequence of Brucella suis 1330.</title>
        <authorList>
            <person name="Tae H."/>
            <person name="Shallom S."/>
            <person name="Settlage R."/>
            <person name="Preston D."/>
            <person name="Adams L.G."/>
            <person name="Garner H.R."/>
        </authorList>
    </citation>
    <scope>NUCLEOTIDE SEQUENCE [LARGE SCALE GENOMIC DNA]</scope>
    <source>
        <strain>1330</strain>
    </source>
</reference>
<organism>
    <name type="scientific">Brucella suis biovar 1 (strain 1330)</name>
    <dbReference type="NCBI Taxonomy" id="204722"/>
    <lineage>
        <taxon>Bacteria</taxon>
        <taxon>Pseudomonadati</taxon>
        <taxon>Pseudomonadota</taxon>
        <taxon>Alphaproteobacteria</taxon>
        <taxon>Hyphomicrobiales</taxon>
        <taxon>Brucellaceae</taxon>
        <taxon>Brucella/Ochrobactrum group</taxon>
        <taxon>Brucella</taxon>
    </lineage>
</organism>
<proteinExistence type="inferred from homology"/>
<comment type="similarity">
    <text evidence="1">Belongs to the bacterial ribosomal protein bS21 family.</text>
</comment>
<name>RS21_BRUSU</name>
<gene>
    <name evidence="1" type="primary">rpsU</name>
    <name type="ordered locus">BRA0966</name>
    <name type="ordered locus">BS1330_II0958</name>
</gene>
<feature type="chain" id="PRO_0000178311" description="Small ribosomal subunit protein bS21">
    <location>
        <begin position="1"/>
        <end position="75"/>
    </location>
</feature>